<proteinExistence type="evidence at protein level"/>
<dbReference type="EMBL" id="AB020810">
    <property type="protein sequence ID" value="BAA36953.1"/>
    <property type="molecule type" value="mRNA"/>
</dbReference>
<dbReference type="PIR" id="A01254">
    <property type="entry name" value="XASNBA"/>
</dbReference>
<dbReference type="PDB" id="4AA2">
    <property type="method" value="X-ray"/>
    <property type="resolution" value="1.99 A"/>
    <property type="chains" value="P=104-113"/>
</dbReference>
<dbReference type="PDB" id="4APJ">
    <property type="method" value="X-ray"/>
    <property type="resolution" value="2.60 A"/>
    <property type="chains" value="P=104-113"/>
</dbReference>
<dbReference type="PDBsum" id="4AA2"/>
<dbReference type="PDBsum" id="4APJ"/>
<dbReference type="SMR" id="P01021"/>
<dbReference type="IntAct" id="P01021">
    <property type="interactions" value="1"/>
</dbReference>
<dbReference type="MINT" id="P01021"/>
<dbReference type="EvolutionaryTrace" id="P01021"/>
<dbReference type="GO" id="GO:0005576">
    <property type="term" value="C:extracellular region"/>
    <property type="evidence" value="ECO:0007669"/>
    <property type="project" value="UniProtKB-SubCell"/>
</dbReference>
<dbReference type="GO" id="GO:0005179">
    <property type="term" value="F:hormone activity"/>
    <property type="evidence" value="ECO:0007669"/>
    <property type="project" value="InterPro"/>
</dbReference>
<dbReference type="GO" id="GO:0030414">
    <property type="term" value="F:peptidase inhibitor activity"/>
    <property type="evidence" value="ECO:0007669"/>
    <property type="project" value="UniProtKB-KW"/>
</dbReference>
<dbReference type="GO" id="GO:0090729">
    <property type="term" value="F:toxin activity"/>
    <property type="evidence" value="ECO:0007669"/>
    <property type="project" value="UniProtKB-KW"/>
</dbReference>
<dbReference type="GO" id="GO:0006182">
    <property type="term" value="P:cGMP biosynthetic process"/>
    <property type="evidence" value="ECO:0007669"/>
    <property type="project" value="TreeGrafter"/>
</dbReference>
<dbReference type="GO" id="GO:0007168">
    <property type="term" value="P:receptor guanylyl cyclase signaling pathway"/>
    <property type="evidence" value="ECO:0007669"/>
    <property type="project" value="TreeGrafter"/>
</dbReference>
<dbReference type="GO" id="GO:0008217">
    <property type="term" value="P:regulation of blood pressure"/>
    <property type="evidence" value="ECO:0007669"/>
    <property type="project" value="UniProtKB-KW"/>
</dbReference>
<dbReference type="GO" id="GO:0042311">
    <property type="term" value="P:vasodilation"/>
    <property type="evidence" value="ECO:0007669"/>
    <property type="project" value="UniProtKB-KW"/>
</dbReference>
<dbReference type="InterPro" id="IPR000663">
    <property type="entry name" value="Natr_peptide"/>
</dbReference>
<dbReference type="InterPro" id="IPR030480">
    <property type="entry name" value="Natr_peptide_CS"/>
</dbReference>
<dbReference type="PANTHER" id="PTHR12167">
    <property type="entry name" value="C-TYPE NATRIURETIC PEPTIDE"/>
    <property type="match status" value="1"/>
</dbReference>
<dbReference type="PANTHER" id="PTHR12167:SF2">
    <property type="entry name" value="C-TYPE NATRIURETIC PEPTIDE"/>
    <property type="match status" value="1"/>
</dbReference>
<dbReference type="Pfam" id="PF00212">
    <property type="entry name" value="ANP"/>
    <property type="match status" value="1"/>
</dbReference>
<dbReference type="PRINTS" id="PR00710">
    <property type="entry name" value="NATPEPTIDES"/>
</dbReference>
<dbReference type="SMART" id="SM00183">
    <property type="entry name" value="NAT_PEP"/>
    <property type="match status" value="1"/>
</dbReference>
<dbReference type="PROSITE" id="PS00263">
    <property type="entry name" value="NATRIURETIC_PEPTIDE"/>
    <property type="match status" value="1"/>
</dbReference>
<evidence type="ECO:0000250" key="1">
    <source>
        <dbReference type="UniProtKB" id="P0C7P5"/>
    </source>
</evidence>
<evidence type="ECO:0000250" key="2">
    <source>
        <dbReference type="UniProtKB" id="P0DMD6"/>
    </source>
</evidence>
<evidence type="ECO:0000250" key="3">
    <source>
        <dbReference type="UniProtKB" id="Q27J49"/>
    </source>
</evidence>
<evidence type="ECO:0000255" key="4"/>
<evidence type="ECO:0000256" key="5">
    <source>
        <dbReference type="SAM" id="MobiDB-lite"/>
    </source>
</evidence>
<evidence type="ECO:0000269" key="6">
    <source>
    </source>
</evidence>
<evidence type="ECO:0000269" key="7">
    <source>
    </source>
</evidence>
<evidence type="ECO:0000269" key="8">
    <source>
    </source>
</evidence>
<evidence type="ECO:0000269" key="9">
    <source>
    </source>
</evidence>
<evidence type="ECO:0000269" key="10">
    <source>
    </source>
</evidence>
<evidence type="ECO:0000269" key="11">
    <source>
    </source>
</evidence>
<evidence type="ECO:0000269" key="12">
    <source>
    </source>
</evidence>
<evidence type="ECO:0000269" key="13">
    <source ref="5"/>
</evidence>
<evidence type="ECO:0000303" key="14">
    <source>
    </source>
</evidence>
<evidence type="ECO:0000303" key="15">
    <source>
    </source>
</evidence>
<evidence type="ECO:0000303" key="16">
    <source>
    </source>
</evidence>
<evidence type="ECO:0000303" key="17">
    <source>
    </source>
</evidence>
<evidence type="ECO:0000303" key="18">
    <source>
    </source>
</evidence>
<evidence type="ECO:0000303" key="19">
    <source>
    </source>
</evidence>
<evidence type="ECO:0000303" key="20">
    <source ref="5"/>
</evidence>
<evidence type="ECO:0000305" key="21"/>
<evidence type="ECO:0000305" key="22">
    <source>
    </source>
</evidence>
<evidence type="ECO:0000305" key="23">
    <source>
    </source>
</evidence>
<evidence type="ECO:0000305" key="24">
    <source>
    </source>
</evidence>
<evidence type="ECO:0000312" key="25">
    <source>
        <dbReference type="PDB" id="4AA2"/>
    </source>
</evidence>
<evidence type="ECO:0000312" key="26">
    <source>
        <dbReference type="PDB" id="4APJ"/>
    </source>
</evidence>
<keyword id="KW-0002">3D-structure</keyword>
<keyword id="KW-0165">Cleavage on pair of basic residues</keyword>
<keyword id="KW-0903">Direct protein sequencing</keyword>
<keyword id="KW-1015">Disulfide bond</keyword>
<keyword id="KW-0382">Hypotensive agent</keyword>
<keyword id="KW-0481">Metalloenzyme inhibitor</keyword>
<keyword id="KW-0483">Metalloprotease inhibitor</keyword>
<keyword id="KW-0646">Protease inhibitor</keyword>
<keyword id="KW-0873">Pyrrolidone carboxylic acid</keyword>
<keyword id="KW-0677">Repeat</keyword>
<keyword id="KW-0964">Secreted</keyword>
<keyword id="KW-0732">Signal</keyword>
<keyword id="KW-0800">Toxin</keyword>
<keyword id="KW-0838">Vasoactive</keyword>
<keyword id="KW-0840">Vasodilator</keyword>
<sequence>MFVSRLAASGLLLLALMALSLDGKPVQQWSQGRPPGPPIPRLVVQQWSQGLPPGPPIPRLVVQQWSQGLPPGPPIPPLVVQQWSQGLPPRPKIPPLVVQQWSQGLPPRPKIPPLVVQKWDPPPVSPPLLLQPHESPAGGTTALREELSLGPEAASGPAAAGADGGRSGSKAPAALHRLSKSKGASATSASASRPMRDLRTDGKQARQNWARMVNPDHHAVGGCCCGGGGGGARRLKGLVKKGVAKGCFGLKLDRIGTMSGLGC</sequence>
<protein>
    <recommendedName>
        <fullName>Bradykinin-potentiating and C-type natriuretic peptides</fullName>
    </recommendedName>
    <alternativeName>
        <fullName>Angiotensin-converting enzyme inhibitor</fullName>
    </alternativeName>
    <alternativeName>
        <fullName>BPP-CNP homolog</fullName>
    </alternativeName>
    <component>
        <recommendedName>
            <fullName evidence="14 15">Blomhotin</fullName>
        </recommendedName>
    </component>
    <component>
        <recommendedName>
            <fullName>Bradykinin-potentiating peptide A</fullName>
            <shortName>BPP-a</shortName>
        </recommendedName>
        <alternativeName>
            <fullName evidence="18 19">Potentiator A</fullName>
        </alternativeName>
    </component>
    <component>
        <recommendedName>
            <fullName evidence="15">Leu3-blomhotin</fullName>
        </recommendedName>
        <alternativeName>
            <fullName evidence="18">Potentiator D</fullName>
        </alternativeName>
    </component>
    <component>
        <recommendedName>
            <fullName evidence="20">Bradykinin-potentiating peptide B</fullName>
            <shortName>BPP-b</shortName>
        </recommendedName>
        <alternativeName>
            <fullName evidence="18">Potentiator B</fullName>
        </alternativeName>
    </component>
    <component>
        <recommendedName>
            <fullName>Bradykinin-potentiating peptide C</fullName>
            <shortName>BPP-c</shortName>
        </recommendedName>
        <alternativeName>
            <fullName evidence="18">Potentiator C</fullName>
        </alternativeName>
    </component>
    <component>
        <recommendedName>
            <fullName>Bradykinin-potentiating peptide E</fullName>
            <shortName>BPP-e</shortName>
        </recommendedName>
        <alternativeName>
            <fullName evidence="18">Potentiator E</fullName>
        </alternativeName>
    </component>
    <component>
        <recommendedName>
            <fullName evidence="16">Bradykinin-potentiating peptide Ahb1</fullName>
            <shortName evidence="16">BPP-Ahb1</shortName>
        </recommendedName>
    </component>
    <component>
        <recommendedName>
            <fullName evidence="16">Bradykinin-potentiating peptide Ahb2</fullName>
            <shortName evidence="16">BPP-Ahb2</shortName>
        </recommendedName>
    </component>
    <component>
        <recommendedName>
            <fullName>C-type natriuretic peptide</fullName>
        </recommendedName>
    </component>
</protein>
<name>BNP_GLOBL</name>
<feature type="signal peptide" evidence="4">
    <location>
        <begin position="1"/>
        <end position="23"/>
    </location>
</feature>
<feature type="propeptide" id="PRO_0000334172" evidence="21">
    <location>
        <begin position="24"/>
        <end position="30"/>
    </location>
</feature>
<feature type="peptide" id="PRO_5000049304" description="Blomhotin" evidence="6">
    <location>
        <begin position="31"/>
        <end position="41"/>
    </location>
</feature>
<feature type="peptide" id="PRO_5000049303" description="Bradykinin-potentiating peptide A" evidence="12">
    <location>
        <begin position="31"/>
        <end position="40"/>
    </location>
</feature>
<feature type="propeptide" id="PRO_0000334173" evidence="21">
    <location>
        <begin position="42"/>
        <end position="48"/>
    </location>
</feature>
<feature type="peptide" id="PRO_5000049305" description="Leu3-blomhotin" evidence="7">
    <location>
        <begin position="49"/>
        <end position="59"/>
    </location>
</feature>
<feature type="propeptide" id="PRO_0000334174" evidence="21">
    <location>
        <begin position="60"/>
        <end position="66"/>
    </location>
</feature>
<feature type="peptide" id="PRO_5000049306" description="Bradykinin-potentiating peptide C" evidence="11">
    <location>
        <begin position="67"/>
        <end position="77"/>
    </location>
</feature>
<feature type="propeptide" id="PRO_0000334175" evidence="21">
    <location>
        <begin position="78"/>
        <end position="84"/>
    </location>
</feature>
<feature type="peptide" id="PRO_5000049307" description="Bradykinin-potentiating peptide B" evidence="13">
    <location>
        <begin position="85"/>
        <end position="95"/>
    </location>
</feature>
<feature type="propeptide" id="PRO_0000334176" evidence="21">
    <location>
        <begin position="96"/>
        <end position="102"/>
    </location>
</feature>
<feature type="peptide" id="PRO_5000049308" description="Bradykinin-potentiating peptide B" evidence="13">
    <location>
        <begin position="103"/>
        <end position="113"/>
    </location>
</feature>
<feature type="propeptide" id="PRO_0000334177" evidence="21">
    <location>
        <begin position="114"/>
        <end position="116"/>
    </location>
</feature>
<feature type="peptide" id="PRO_5000049309" description="Bradykinin-potentiating peptide E" evidence="24">
    <location>
        <begin position="117"/>
        <end position="127"/>
    </location>
</feature>
<feature type="peptide" id="PRO_0000342453" description="Bradykinin-potentiating peptide Ahb1" evidence="23">
    <location>
        <begin position="117"/>
        <end position="121"/>
    </location>
</feature>
<feature type="propeptide" id="PRO_0000334178" evidence="21">
    <location>
        <begin position="128"/>
        <end position="130"/>
    </location>
</feature>
<feature type="peptide" id="PRO_0000342454" description="Bradykinin-potentiating peptide Ahb2" evidence="23">
    <location>
        <begin position="131"/>
        <end position="136"/>
    </location>
</feature>
<feature type="propeptide" id="PRO_0000459644" evidence="21">
    <location>
        <begin position="137"/>
        <end position="241"/>
    </location>
</feature>
<feature type="peptide" id="PRO_5000049310" description="C-type natriuretic peptide" evidence="3">
    <location>
        <begin position="242"/>
        <end position="263"/>
    </location>
</feature>
<feature type="region of interest" description="Angiotensin-converting enzyme active site binding" evidence="9 10">
    <location>
        <begin position="89"/>
        <end position="95"/>
    </location>
</feature>
<feature type="region of interest" description="Angiotensin-converting enzyme active site binding" evidence="9 10">
    <location>
        <begin position="107"/>
        <end position="113"/>
    </location>
</feature>
<feature type="region of interest" description="Disordered" evidence="5">
    <location>
        <begin position="152"/>
        <end position="171"/>
    </location>
</feature>
<feature type="region of interest" description="Disordered" evidence="5">
    <location>
        <begin position="177"/>
        <end position="205"/>
    </location>
</feature>
<feature type="compositionally biased region" description="Low complexity" evidence="5">
    <location>
        <begin position="181"/>
        <end position="192"/>
    </location>
</feature>
<feature type="compositionally biased region" description="Basic and acidic residues" evidence="5">
    <location>
        <begin position="194"/>
        <end position="204"/>
    </location>
</feature>
<feature type="site" description="Angiotensin-converting enzyme active site binding; via amide nitrogen" evidence="9">
    <location>
        <position position="86"/>
    </location>
</feature>
<feature type="site" description="Angiotensin-converting enzyme active site binding; via amide nitrogen" evidence="9">
    <location>
        <position position="104"/>
    </location>
</feature>
<feature type="modified residue" description="Pyrrolidone carboxylic acid" evidence="6 12">
    <location>
        <position position="31"/>
    </location>
</feature>
<feature type="modified residue" description="Pyrrolidone carboxylic acid" evidence="7">
    <location>
        <position position="49"/>
    </location>
</feature>
<feature type="modified residue" description="Pyrrolidone carboxylic acid" evidence="11">
    <location>
        <position position="67"/>
    </location>
</feature>
<feature type="modified residue" description="Pyrrolidone carboxylic acid" evidence="13">
    <location>
        <position position="85"/>
    </location>
</feature>
<feature type="modified residue" description="Pyrrolidone carboxylic acid" evidence="13">
    <location>
        <position position="103"/>
    </location>
</feature>
<feature type="modified residue" description="Pyrrolidone carboxylic acid" evidence="17">
    <location>
        <position position="117"/>
    </location>
</feature>
<feature type="modified residue" description="Pyrrolidone carboxylic acid" evidence="17">
    <location>
        <position position="131"/>
    </location>
</feature>
<feature type="disulfide bond" evidence="2">
    <location>
        <begin position="247"/>
        <end position="263"/>
    </location>
</feature>
<accession>P01021</accession>
<accession>Q9PT52</accession>
<organism>
    <name type="scientific">Gloydius blomhoffii</name>
    <name type="common">Mamushi</name>
    <name type="synonym">Agkistrodon halys blomhoffi</name>
    <dbReference type="NCBI Taxonomy" id="242054"/>
    <lineage>
        <taxon>Eukaryota</taxon>
        <taxon>Metazoa</taxon>
        <taxon>Chordata</taxon>
        <taxon>Craniata</taxon>
        <taxon>Vertebrata</taxon>
        <taxon>Euteleostomi</taxon>
        <taxon>Lepidosauria</taxon>
        <taxon>Squamata</taxon>
        <taxon>Bifurcata</taxon>
        <taxon>Unidentata</taxon>
        <taxon>Episquamata</taxon>
        <taxon>Toxicofera</taxon>
        <taxon>Serpentes</taxon>
        <taxon>Colubroidea</taxon>
        <taxon>Viperidae</taxon>
        <taxon>Crotalinae</taxon>
        <taxon>Gloydius</taxon>
    </lineage>
</organism>
<comment type="function">
    <molecule>Blomhotin</molecule>
    <text evidence="6 7">Inhibits the rabbit lung angiotensin-converting enzyme (ACE) (IC(50)=15 uM) (PubMed:10866809). Contracts the rat gastric fundus smooth muscle in a rapid and transient manner (PubMed:10519653, PubMed:10866809).</text>
</comment>
<comment type="function">
    <molecule>Bradykinin-potentiating peptide A</molecule>
    <text evidence="11">Causes no contraction of the rat gastric fundus smooth muscle even at high concentrations. Causes very weak contraction of the isolated guinea pig ileum (PubMed:4323853). Causes weak contraction on rat uterus (PubMed:4323853).</text>
</comment>
<comment type="function">
    <molecule>Bradykinin-potentiating peptide B</molecule>
    <text evidence="7 8 10 11">Inhibits the activity of the angiotensin-converting enzyme (ACE) by a preferential interaction with its C-domain (Ki=30 nM, IC(50)=1.1 uM) (PubMed:10866809, PubMed:11994001, PubMed:23082758). It binds ACE in a zinc-independent manner (PubMed:23056909). Also potentiates the hypotensive effects of bradykinin. Causes high contraction of the isolated guinea pig ileum and weak contraction on rat uterus (PubMed:4323853).</text>
</comment>
<comment type="function">
    <molecule>Bradykinin-potentiating peptide C</molecule>
    <text evidence="7 8 11">Inhibits the activity of the angiotensin-converting enzyme (ACE) by interacting with the same potency to its C- and N-domains (PubMed:11994001). Inhibits the rabbit lung angiotensin-converting enzyme (ACE) (IC(50)=7.1 uM) (PubMed:10866809). Causes weak contraction of the isolated guinea pig ileum (PubMed:4323853). Causes weak contraction on rat uterus (PubMed:4323853).</text>
</comment>
<comment type="function">
    <molecule>Leu3-blomhotin</molecule>
    <text evidence="7 11">Inhibits the rabbit lung angiotensin-converting enzyme (ACE) (IC(50)=46 uM) (PubMed:10866809). Synthetic Leu3-blomhotin contracts the rat gastric fundus smooth muscle in a rapid and transient manner (PubMed:10866809). Causes moderate contraction of the isolated guinea pig ileum (PubMed:4323853). Causes weak contraction on rat uterus (PubMed:4323853).</text>
</comment>
<comment type="function">
    <molecule>Bradykinin-potentiating peptide E</molecule>
    <text evidence="11">Causes weak contraction of the isolated guinea pig ileum (PubMed:4323853). Causes about 50-fold more potentiating activity on rat uterus than on guinea pig ileum (PubMed:4323853).</text>
</comment>
<comment type="function">
    <molecule>Bradykinin-potentiating peptide Ahb1</molecule>
    <text evidence="8">Synthetic peptide potentiates the bradykinin in vivo.</text>
</comment>
<comment type="function">
    <molecule>Bradykinin-potentiating peptide Ahb2</molecule>
    <text evidence="8">Synthetic peptide does not show any bradykinin-potentiating effects.</text>
</comment>
<comment type="function">
    <molecule>C-type natriuretic peptide</molecule>
    <text evidence="1">has a vasorelaxant activity in rat aortic strips and a diuretic potency in anesthetized rats (By similarity). May act by activating natriuretic receptors (NPR1 and/or NPR2).</text>
</comment>
<comment type="subcellular location">
    <subcellularLocation>
        <location evidence="6 7 11 12 13">Secreted</location>
    </subcellularLocation>
</comment>
<comment type="tissue specificity">
    <text evidence="22">Expressed by the venom gland.</text>
</comment>
<comment type="mass spectrometry">
    <molecule>Leu3-blomhotin</molecule>
</comment>
<comment type="similarity">
    <text evidence="21">In the N-terminal section; belongs to the bradykinin-potentiating peptide family.</text>
</comment>
<comment type="similarity">
    <text evidence="21">In the C-terminal section; belongs to the natriuretic peptide family.</text>
</comment>
<reference key="1">
    <citation type="journal article" date="1999" name="Immunopharmacology">
        <title>Bradykinin-potentiating peptides and C-type natriuretic peptides from snake venom.</title>
        <authorList>
            <person name="Higuchi S."/>
            <person name="Murayama N."/>
            <person name="Saguchi K."/>
            <person name="Ohi H."/>
            <person name="Fujita Y."/>
            <person name="de Camargo A.C.M."/>
            <person name="Ogawa T."/>
            <person name="Deshimaru M."/>
            <person name="Ohno M."/>
        </authorList>
    </citation>
    <scope>NUCLEOTIDE SEQUENCE [MRNA]</scope>
    <source>
        <tissue>Venom gland</tissue>
    </source>
</reference>
<reference key="2">
    <citation type="journal article" date="1999" name="Toxicon">
        <title>Blomhotin: a novel peptide with smooth muscle contractile activity identified in the venom of Agkistrodon halys blomhoffii.</title>
        <authorList>
            <person name="Yanoshita R."/>
            <person name="Kasuga A."/>
            <person name="Inoue S."/>
            <person name="Ikeda K."/>
            <person name="Samejima Y."/>
        </authorList>
    </citation>
    <scope>PROTEIN SEQUENCE OF 31-41</scope>
    <scope>PYROGLUTAMATE FORMATION AT GLN-31</scope>
    <scope>FUNCTION</scope>
    <scope>SUBCELLULAR LOCATION</scope>
    <source>
        <tissue>Venom</tissue>
    </source>
</reference>
<reference key="3">
    <citation type="journal article" date="1973" name="Experientia">
        <title>Structure of potentiator A, one of the five bradykinin potentiating peptides from the venom of Agkistrodon halys blomhoffii.</title>
        <authorList>
            <person name="Kato H."/>
            <person name="Suzuki T."/>
            <person name="Okada K."/>
            <person name="Kimura T."/>
            <person name="Sakakibara S."/>
        </authorList>
    </citation>
    <scope>PROTEIN SEQUENCE OF 31-40</scope>
    <scope>PYROGLUTAMATE FORMATION AT GLN-31</scope>
    <scope>SUBCELLULAR LOCATION</scope>
    <source>
        <tissue>Venom</tissue>
    </source>
</reference>
<reference key="4">
    <citation type="journal article" date="1971" name="Biochemistry">
        <title>Bradykinin-potentiating peptides from the venom of Agkistrodon halys blomhoffi. Isolation of five bradykinin potentiators and the amino acid sequences of two of them, potentiators B and C.</title>
        <authorList>
            <person name="Kato H."/>
            <person name="Suzuki T."/>
        </authorList>
    </citation>
    <scope>PROTEIN SEQUENCE OF 67-77</scope>
    <scope>PYROGLUTAMATE FORMATION AT GLN-67</scope>
    <scope>FUNCTION</scope>
    <scope>SUBCELLULAR LOCATION</scope>
    <source>
        <tissue>Venom</tissue>
    </source>
</reference>
<reference key="5">
    <citation type="journal article" date="1970" name="Proc. Jpn. Acad., B, Phys. Biol. Sci.">
        <title>Amino acid sequence of bradykinin-potentiating peptide isolated from the venom of Agkistrodon halys blomhoffii.</title>
        <authorList>
            <person name="Kato H."/>
            <person name="Suzuki T."/>
        </authorList>
    </citation>
    <scope>PROTEIN SEQUENCE OF 85-95 AND 103-113</scope>
    <scope>PYROGLUTAMATE FORMATION AT GLN-85 AND GLN-103</scope>
    <scope>SUBCELLULAR LOCATION</scope>
    <source>
        <tissue>Venom</tissue>
    </source>
</reference>
<reference key="6">
    <citation type="journal article" date="2000" name="Eur. J. Biochem.">
        <title>cDNA cloning of bradykinin-potentiating peptides-C-type natriuretic peptide precursor, and characterization of the novel peptide Leu3-blomhotin from the venom of Agkistrodon blomhoffi.</title>
        <authorList>
            <person name="Murayama N."/>
            <person name="Michel G.H."/>
            <person name="Yanoshita R."/>
            <person name="Samejima Y."/>
            <person name="Saguchi K."/>
            <person name="Ohi H."/>
            <person name="Fujita Y."/>
            <person name="Higuchi S."/>
        </authorList>
    </citation>
    <scope>PROTEIN SEQUENCE OF 49-59</scope>
    <scope>SYNTHESIS OF 31-40 AND 49-59 (BPP-A AND LEU3-BLOMHOTIN)</scope>
    <scope>FUNCTION</scope>
    <scope>PYROGLUTAMATE FORMATION AT GLN-49</scope>
    <scope>MASS SPECTROMETRY</scope>
    <scope>SUBCELLULAR LOCATION</scope>
    <source>
        <tissue>Venom</tissue>
    </source>
</reference>
<reference key="7">
    <citation type="journal article" date="2002" name="Biochemistry">
        <title>Selective inhibition of the C-domain of angiotensin I converting enzyme by bradykinin potentiating peptides.</title>
        <authorList>
            <person name="Cotton J."/>
            <person name="Hayashi M.A."/>
            <person name="Cuniasse P."/>
            <person name="Vazeux G."/>
            <person name="Ianzer D."/>
            <person name="De Camargo A.C."/>
            <person name="Dive V."/>
        </authorList>
    </citation>
    <scope>SYNTHESIS OF 67-77; 85-95 AND 103-113 (BPP-B AND BPP-C)</scope>
    <scope>FUNCTION</scope>
</reference>
<reference key="8">
    <citation type="journal article" date="2007" name="Biochem. Pharmacol.">
        <title>Identification of novel bradykinin-potentiating peptides (BPPs) in the venom gland of a rattlesnake allowed the evaluation of the structure-function relationship of BPPs.</title>
        <authorList>
            <person name="Gomes C.L."/>
            <person name="Konno K."/>
            <person name="Conceicao I.M."/>
            <person name="Ianzer D."/>
            <person name="Yamanouye N."/>
            <person name="Prezoto B.C."/>
            <person name="Assakura M.T."/>
            <person name="Radis-Baptista G."/>
            <person name="Yamane T."/>
            <person name="Santos R.A."/>
            <person name="de Camargo A.C.M."/>
            <person name="Hayashi M.A.F."/>
        </authorList>
    </citation>
    <scope>SYNTHESIS OF 117-121 AND 131-136 (BPP-AHB1 AND BPP-AHB2)</scope>
    <scope>FUNCTION</scope>
    <scope>PYROGLUTAMATE FORMATION AT GLN-117 AND GLN-131</scope>
</reference>
<reference evidence="25" key="9">
    <citation type="journal article" date="2012" name="FEBS J.">
        <title>Structural basis of peptide recognition by the angiotensin-1 converting enzyme homologue AnCE from Drosophila melanogaster.</title>
        <authorList>
            <person name="Akif M."/>
            <person name="Masuyer G."/>
            <person name="Bingham R.J."/>
            <person name="Sturrock E.D."/>
            <person name="Isaac R.E."/>
            <person name="Acharya K.R."/>
        </authorList>
    </citation>
    <scope>X-RAY CRYSTALLOGRAPHY (1.99 ANGSTROMS) OF 85-95 AND 103-113 (BPP-B) IN COMPLEX WITH DROSOPHILA ANGIOTENSIN-CONVERTING ENZYME</scope>
    <scope>FUNCTION</scope>
</reference>
<reference evidence="26" key="10">
    <citation type="journal article" date="2012" name="Sci. Rep.">
        <title>Molecular recognition and regulation of human angiotensin-I converting enzyme (ACE) activity by natural inhibitory peptides.</title>
        <authorList>
            <person name="Masuyer G."/>
            <person name="Schwager S.L."/>
            <person name="Sturrock E.D."/>
            <person name="Isaac R.E."/>
            <person name="Acharya K.R."/>
        </authorList>
    </citation>
    <scope>X-RAY CRYSTALLOGRAPHY (2.6 ANGSTROMS) OF 85-95 AND 103-113 IN COMPLEX WITH HUMAN ANGIOTENSIN-CONVERTING ENZYME</scope>
</reference>